<reference key="1">
    <citation type="journal article" date="2004" name="Proc. Natl. Acad. Sci. U.S.A.">
        <title>Genomic plasticity of the causative agent of melioidosis, Burkholderia pseudomallei.</title>
        <authorList>
            <person name="Holden M.T.G."/>
            <person name="Titball R.W."/>
            <person name="Peacock S.J."/>
            <person name="Cerdeno-Tarraga A.-M."/>
            <person name="Atkins T."/>
            <person name="Crossman L.C."/>
            <person name="Pitt T."/>
            <person name="Churcher C."/>
            <person name="Mungall K.L."/>
            <person name="Bentley S.D."/>
            <person name="Sebaihia M."/>
            <person name="Thomson N.R."/>
            <person name="Bason N."/>
            <person name="Beacham I.R."/>
            <person name="Brooks K."/>
            <person name="Brown K.A."/>
            <person name="Brown N.F."/>
            <person name="Challis G.L."/>
            <person name="Cherevach I."/>
            <person name="Chillingworth T."/>
            <person name="Cronin A."/>
            <person name="Crossett B."/>
            <person name="Davis P."/>
            <person name="DeShazer D."/>
            <person name="Feltwell T."/>
            <person name="Fraser A."/>
            <person name="Hance Z."/>
            <person name="Hauser H."/>
            <person name="Holroyd S."/>
            <person name="Jagels K."/>
            <person name="Keith K.E."/>
            <person name="Maddison M."/>
            <person name="Moule S."/>
            <person name="Price C."/>
            <person name="Quail M.A."/>
            <person name="Rabbinowitsch E."/>
            <person name="Rutherford K."/>
            <person name="Sanders M."/>
            <person name="Simmonds M."/>
            <person name="Songsivilai S."/>
            <person name="Stevens K."/>
            <person name="Tumapa S."/>
            <person name="Vesaratchavest M."/>
            <person name="Whitehead S."/>
            <person name="Yeats C."/>
            <person name="Barrell B.G."/>
            <person name="Oyston P.C.F."/>
            <person name="Parkhill J."/>
        </authorList>
    </citation>
    <scope>NUCLEOTIDE SEQUENCE [LARGE SCALE GENOMIC DNA]</scope>
    <source>
        <strain>K96243</strain>
    </source>
</reference>
<name>TATB_BURPS</name>
<protein>
    <recommendedName>
        <fullName evidence="1">Sec-independent protein translocase protein TatB</fullName>
    </recommendedName>
</protein>
<accession>Q63Q98</accession>
<keyword id="KW-0997">Cell inner membrane</keyword>
<keyword id="KW-1003">Cell membrane</keyword>
<keyword id="KW-0472">Membrane</keyword>
<keyword id="KW-0653">Protein transport</keyword>
<keyword id="KW-1185">Reference proteome</keyword>
<keyword id="KW-0811">Translocation</keyword>
<keyword id="KW-0812">Transmembrane</keyword>
<keyword id="KW-1133">Transmembrane helix</keyword>
<keyword id="KW-0813">Transport</keyword>
<sequence>MLDLGLSKMALIGVVALVVLGPERLPRVARTAGALFGRAQRYINDVKAEVSREIELDALRTMKTDFEQAARNVENTIHDNLREHERDLNAAWNSAVSPGGSAAADAPDGPSAASGEPSWRTIAAAPAKRRNWRVKKAVTPVWYKRATMRRTQVQSGAARVARHRPASLRRPARFL</sequence>
<proteinExistence type="inferred from homology"/>
<comment type="function">
    <text evidence="1">Part of the twin-arginine translocation (Tat) system that transports large folded proteins containing a characteristic twin-arginine motif in their signal peptide across membranes. Together with TatC, TatB is part of a receptor directly interacting with Tat signal peptides. TatB may form an oligomeric binding site that transiently accommodates folded Tat precursor proteins before their translocation.</text>
</comment>
<comment type="subunit">
    <text evidence="1">The Tat system comprises two distinct complexes: a TatABC complex, containing multiple copies of TatA, TatB and TatC subunits, and a separate TatA complex, containing only TatA subunits. Substrates initially bind to the TatABC complex, which probably triggers association of the separate TatA complex to form the active translocon.</text>
</comment>
<comment type="subcellular location">
    <subcellularLocation>
        <location evidence="1">Cell inner membrane</location>
        <topology evidence="1">Single-pass membrane protein</topology>
    </subcellularLocation>
</comment>
<comment type="similarity">
    <text evidence="1">Belongs to the TatB family.</text>
</comment>
<feature type="chain" id="PRO_0000301153" description="Sec-independent protein translocase protein TatB">
    <location>
        <begin position="1"/>
        <end position="175"/>
    </location>
</feature>
<feature type="transmembrane region" description="Helical" evidence="1">
    <location>
        <begin position="1"/>
        <end position="21"/>
    </location>
</feature>
<feature type="region of interest" description="Disordered" evidence="2">
    <location>
        <begin position="94"/>
        <end position="118"/>
    </location>
</feature>
<feature type="region of interest" description="Disordered" evidence="2">
    <location>
        <begin position="153"/>
        <end position="175"/>
    </location>
</feature>
<feature type="compositionally biased region" description="Low complexity" evidence="2">
    <location>
        <begin position="94"/>
        <end position="115"/>
    </location>
</feature>
<feature type="compositionally biased region" description="Basic residues" evidence="2">
    <location>
        <begin position="160"/>
        <end position="175"/>
    </location>
</feature>
<organism>
    <name type="scientific">Burkholderia pseudomallei (strain K96243)</name>
    <dbReference type="NCBI Taxonomy" id="272560"/>
    <lineage>
        <taxon>Bacteria</taxon>
        <taxon>Pseudomonadati</taxon>
        <taxon>Pseudomonadota</taxon>
        <taxon>Betaproteobacteria</taxon>
        <taxon>Burkholderiales</taxon>
        <taxon>Burkholderiaceae</taxon>
        <taxon>Burkholderia</taxon>
        <taxon>pseudomallei group</taxon>
    </lineage>
</organism>
<gene>
    <name evidence="1" type="primary">tatB</name>
    <name type="ordered locus">BPSL3127</name>
</gene>
<evidence type="ECO:0000255" key="1">
    <source>
        <dbReference type="HAMAP-Rule" id="MF_00237"/>
    </source>
</evidence>
<evidence type="ECO:0000256" key="2">
    <source>
        <dbReference type="SAM" id="MobiDB-lite"/>
    </source>
</evidence>
<dbReference type="EMBL" id="BX571965">
    <property type="protein sequence ID" value="CAH37137.1"/>
    <property type="molecule type" value="Genomic_DNA"/>
</dbReference>
<dbReference type="RefSeq" id="WP_004531855.1">
    <property type="nucleotide sequence ID" value="NZ_CP009538.1"/>
</dbReference>
<dbReference type="RefSeq" id="YP_109720.1">
    <property type="nucleotide sequence ID" value="NC_006350.1"/>
</dbReference>
<dbReference type="SMR" id="Q63Q98"/>
<dbReference type="STRING" id="272560.BPSL3127"/>
<dbReference type="GeneID" id="93061744"/>
<dbReference type="KEGG" id="bps:BPSL3127"/>
<dbReference type="PATRIC" id="fig|272560.51.peg.2116"/>
<dbReference type="eggNOG" id="COG1826">
    <property type="taxonomic scope" value="Bacteria"/>
</dbReference>
<dbReference type="Proteomes" id="UP000000605">
    <property type="component" value="Chromosome 1"/>
</dbReference>
<dbReference type="GO" id="GO:0033281">
    <property type="term" value="C:TAT protein transport complex"/>
    <property type="evidence" value="ECO:0007669"/>
    <property type="project" value="UniProtKB-UniRule"/>
</dbReference>
<dbReference type="GO" id="GO:0008320">
    <property type="term" value="F:protein transmembrane transporter activity"/>
    <property type="evidence" value="ECO:0007669"/>
    <property type="project" value="UniProtKB-UniRule"/>
</dbReference>
<dbReference type="GO" id="GO:0043953">
    <property type="term" value="P:protein transport by the Tat complex"/>
    <property type="evidence" value="ECO:0007669"/>
    <property type="project" value="UniProtKB-UniRule"/>
</dbReference>
<dbReference type="Gene3D" id="1.20.5.3310">
    <property type="match status" value="1"/>
</dbReference>
<dbReference type="HAMAP" id="MF_00237">
    <property type="entry name" value="TatB"/>
    <property type="match status" value="1"/>
</dbReference>
<dbReference type="InterPro" id="IPR003369">
    <property type="entry name" value="TatA/B/E"/>
</dbReference>
<dbReference type="InterPro" id="IPR018448">
    <property type="entry name" value="TatB"/>
</dbReference>
<dbReference type="NCBIfam" id="TIGR01410">
    <property type="entry name" value="tatB"/>
    <property type="match status" value="1"/>
</dbReference>
<dbReference type="PANTHER" id="PTHR33162">
    <property type="entry name" value="SEC-INDEPENDENT PROTEIN TRANSLOCASE PROTEIN TATA, CHLOROPLASTIC"/>
    <property type="match status" value="1"/>
</dbReference>
<dbReference type="PANTHER" id="PTHR33162:SF1">
    <property type="entry name" value="SEC-INDEPENDENT PROTEIN TRANSLOCASE PROTEIN TATA, CHLOROPLASTIC"/>
    <property type="match status" value="1"/>
</dbReference>
<dbReference type="Pfam" id="PF02416">
    <property type="entry name" value="TatA_B_E"/>
    <property type="match status" value="1"/>
</dbReference>
<dbReference type="PRINTS" id="PR01506">
    <property type="entry name" value="TATBPROTEIN"/>
</dbReference>